<protein>
    <recommendedName>
        <fullName>Cysteine-rich receptor-like protein kinase 42</fullName>
        <shortName>Cysteine-rich RLK42</shortName>
        <ecNumber>2.7.11.-</ecNumber>
    </recommendedName>
</protein>
<gene>
    <name type="primary">CRK42</name>
    <name type="ordered locus">At5g40380</name>
    <name type="ORF">MPO12.90</name>
</gene>
<keyword id="KW-0067">ATP-binding</keyword>
<keyword id="KW-0325">Glycoprotein</keyword>
<keyword id="KW-0418">Kinase</keyword>
<keyword id="KW-0472">Membrane</keyword>
<keyword id="KW-0547">Nucleotide-binding</keyword>
<keyword id="KW-0597">Phosphoprotein</keyword>
<keyword id="KW-0675">Receptor</keyword>
<keyword id="KW-1185">Reference proteome</keyword>
<keyword id="KW-0677">Repeat</keyword>
<keyword id="KW-0723">Serine/threonine-protein kinase</keyword>
<keyword id="KW-0732">Signal</keyword>
<keyword id="KW-0808">Transferase</keyword>
<keyword id="KW-0812">Transmembrane</keyword>
<keyword id="KW-1133">Transmembrane helix</keyword>
<feature type="signal peptide" evidence="2">
    <location>
        <begin position="1"/>
        <end position="28"/>
    </location>
</feature>
<feature type="chain" id="PRO_0000295089" description="Cysteine-rich receptor-like protein kinase 42">
    <location>
        <begin position="29"/>
        <end position="651"/>
    </location>
</feature>
<feature type="topological domain" description="Extracellular" evidence="2">
    <location>
        <begin position="29"/>
        <end position="251"/>
    </location>
</feature>
<feature type="transmembrane region" description="Helical" evidence="2">
    <location>
        <begin position="252"/>
        <end position="272"/>
    </location>
</feature>
<feature type="topological domain" description="Cytoplasmic" evidence="2">
    <location>
        <begin position="273"/>
        <end position="651"/>
    </location>
</feature>
<feature type="domain" description="Gnk2-homologous 1" evidence="4">
    <location>
        <begin position="35"/>
        <end position="135"/>
    </location>
</feature>
<feature type="domain" description="Gnk2-homologous 2" evidence="4">
    <location>
        <begin position="137"/>
        <end position="236"/>
    </location>
</feature>
<feature type="domain" description="Protein kinase" evidence="3">
    <location>
        <begin position="315"/>
        <end position="604"/>
    </location>
</feature>
<feature type="active site" description="Proton acceptor" evidence="3 5">
    <location>
        <position position="440"/>
    </location>
</feature>
<feature type="binding site" evidence="3">
    <location>
        <begin position="321"/>
        <end position="329"/>
    </location>
    <ligand>
        <name>ATP</name>
        <dbReference type="ChEBI" id="CHEBI:30616"/>
    </ligand>
</feature>
<feature type="binding site" evidence="3">
    <location>
        <position position="343"/>
    </location>
    <ligand>
        <name>ATP</name>
        <dbReference type="ChEBI" id="CHEBI:30616"/>
    </ligand>
</feature>
<feature type="modified residue" description="Phosphotyrosine" evidence="1">
    <location>
        <position position="388"/>
    </location>
</feature>
<feature type="modified residue" description="Phosphoserine" evidence="1">
    <location>
        <position position="444"/>
    </location>
</feature>
<feature type="modified residue" description="Phosphoserine" evidence="1">
    <location>
        <position position="473"/>
    </location>
</feature>
<feature type="modified residue" description="Phosphothreonine" evidence="1">
    <location>
        <position position="474"/>
    </location>
</feature>
<feature type="modified residue" description="Phosphothreonine" evidence="1">
    <location>
        <position position="479"/>
    </location>
</feature>
<feature type="modified residue" description="Phosphotyrosine" evidence="1">
    <location>
        <position position="487"/>
    </location>
</feature>
<feature type="glycosylation site" description="N-linked (GlcNAc...) asparagine" evidence="2">
    <location>
        <position position="79"/>
    </location>
</feature>
<feature type="glycosylation site" description="N-linked (GlcNAc...) asparagine" evidence="2">
    <location>
        <position position="151"/>
    </location>
</feature>
<feature type="sequence conflict" description="In Ref. 3; BX829950." evidence="6" ref="3">
    <original>V</original>
    <variation>L</variation>
    <location>
        <position position="340"/>
    </location>
</feature>
<feature type="sequence conflict" description="In Ref. 3; BX829950." evidence="6" ref="3">
    <original>V</original>
    <variation>F</variation>
    <location>
        <position position="372"/>
    </location>
</feature>
<feature type="sequence conflict" description="In Ref. 3; BX829950." evidence="6" ref="3">
    <original>A</original>
    <variation>E</variation>
    <location>
        <position position="422"/>
    </location>
</feature>
<feature type="sequence conflict" description="In Ref. 3; BX829950." evidence="6" ref="3">
    <original>G</original>
    <variation>V</variation>
    <location>
        <position position="460"/>
    </location>
</feature>
<reference key="1">
    <citation type="journal article" date="1997" name="DNA Res.">
        <title>Structural analysis of Arabidopsis thaliana chromosome 5. II. Sequence features of the regions of 1,044,062 bp covered by thirteen physically assigned P1 clones.</title>
        <authorList>
            <person name="Kotani H."/>
            <person name="Nakamura Y."/>
            <person name="Sato S."/>
            <person name="Kaneko T."/>
            <person name="Asamizu E."/>
            <person name="Miyajima N."/>
            <person name="Tabata S."/>
        </authorList>
    </citation>
    <scope>NUCLEOTIDE SEQUENCE [LARGE SCALE GENOMIC DNA]</scope>
    <source>
        <strain>cv. Columbia</strain>
    </source>
</reference>
<reference key="2">
    <citation type="journal article" date="2017" name="Plant J.">
        <title>Araport11: a complete reannotation of the Arabidopsis thaliana reference genome.</title>
        <authorList>
            <person name="Cheng C.Y."/>
            <person name="Krishnakumar V."/>
            <person name="Chan A.P."/>
            <person name="Thibaud-Nissen F."/>
            <person name="Schobel S."/>
            <person name="Town C.D."/>
        </authorList>
    </citation>
    <scope>GENOME REANNOTATION</scope>
    <source>
        <strain>cv. Columbia</strain>
    </source>
</reference>
<reference key="3">
    <citation type="journal article" date="2004" name="Genome Res.">
        <title>Whole genome sequence comparisons and 'full-length' cDNA sequences: a combined approach to evaluate and improve Arabidopsis genome annotation.</title>
        <authorList>
            <person name="Castelli V."/>
            <person name="Aury J.-M."/>
            <person name="Jaillon O."/>
            <person name="Wincker P."/>
            <person name="Clepet C."/>
            <person name="Menard M."/>
            <person name="Cruaud C."/>
            <person name="Quetier F."/>
            <person name="Scarpelli C."/>
            <person name="Schaechter V."/>
            <person name="Temple G."/>
            <person name="Caboche M."/>
            <person name="Weissenbach J."/>
            <person name="Salanoubat M."/>
        </authorList>
    </citation>
    <scope>NUCLEOTIDE SEQUENCE [LARGE SCALE MRNA] OF 10-642</scope>
    <source>
        <strain>cv. Columbia</strain>
    </source>
</reference>
<reference key="4">
    <citation type="journal article" date="2001" name="Plant Physiol.">
        <title>A superfamily of proteins with novel cysteine-rich repeats.</title>
        <authorList>
            <person name="Chen Z."/>
        </authorList>
    </citation>
    <scope>GENE FAMILY ORGANIZATION</scope>
    <scope>NOMENCLATURE</scope>
</reference>
<name>CRK42_ARATH</name>
<comment type="catalytic activity">
    <reaction>
        <text>L-seryl-[protein] + ATP = O-phospho-L-seryl-[protein] + ADP + H(+)</text>
        <dbReference type="Rhea" id="RHEA:17989"/>
        <dbReference type="Rhea" id="RHEA-COMP:9863"/>
        <dbReference type="Rhea" id="RHEA-COMP:11604"/>
        <dbReference type="ChEBI" id="CHEBI:15378"/>
        <dbReference type="ChEBI" id="CHEBI:29999"/>
        <dbReference type="ChEBI" id="CHEBI:30616"/>
        <dbReference type="ChEBI" id="CHEBI:83421"/>
        <dbReference type="ChEBI" id="CHEBI:456216"/>
    </reaction>
</comment>
<comment type="catalytic activity">
    <reaction>
        <text>L-threonyl-[protein] + ATP = O-phospho-L-threonyl-[protein] + ADP + H(+)</text>
        <dbReference type="Rhea" id="RHEA:46608"/>
        <dbReference type="Rhea" id="RHEA-COMP:11060"/>
        <dbReference type="Rhea" id="RHEA-COMP:11605"/>
        <dbReference type="ChEBI" id="CHEBI:15378"/>
        <dbReference type="ChEBI" id="CHEBI:30013"/>
        <dbReference type="ChEBI" id="CHEBI:30616"/>
        <dbReference type="ChEBI" id="CHEBI:61977"/>
        <dbReference type="ChEBI" id="CHEBI:456216"/>
    </reaction>
</comment>
<comment type="subcellular location">
    <subcellularLocation>
        <location evidence="6">Membrane</location>
        <topology evidence="6">Single-pass membrane protein</topology>
    </subcellularLocation>
</comment>
<comment type="similarity">
    <text evidence="3">Belongs to the protein kinase superfamily. Ser/Thr protein kinase family. CRK subfamily.</text>
</comment>
<comment type="sequence caution" evidence="6">
    <conflict type="frameshift">
        <sequence resource="EMBL" id="BX829950"/>
    </conflict>
</comment>
<organism>
    <name type="scientific">Arabidopsis thaliana</name>
    <name type="common">Mouse-ear cress</name>
    <dbReference type="NCBI Taxonomy" id="3702"/>
    <lineage>
        <taxon>Eukaryota</taxon>
        <taxon>Viridiplantae</taxon>
        <taxon>Streptophyta</taxon>
        <taxon>Embryophyta</taxon>
        <taxon>Tracheophyta</taxon>
        <taxon>Spermatophyta</taxon>
        <taxon>Magnoliopsida</taxon>
        <taxon>eudicotyledons</taxon>
        <taxon>Gunneridae</taxon>
        <taxon>Pentapetalae</taxon>
        <taxon>rosids</taxon>
        <taxon>malvids</taxon>
        <taxon>Brassicales</taxon>
        <taxon>Brassicaceae</taxon>
        <taxon>Camelineae</taxon>
        <taxon>Arabidopsis</taxon>
    </lineage>
</organism>
<evidence type="ECO:0000250" key="1">
    <source>
        <dbReference type="UniProtKB" id="O48814"/>
    </source>
</evidence>
<evidence type="ECO:0000255" key="2"/>
<evidence type="ECO:0000255" key="3">
    <source>
        <dbReference type="PROSITE-ProRule" id="PRU00159"/>
    </source>
</evidence>
<evidence type="ECO:0000255" key="4">
    <source>
        <dbReference type="PROSITE-ProRule" id="PRU00806"/>
    </source>
</evidence>
<evidence type="ECO:0000255" key="5">
    <source>
        <dbReference type="PROSITE-ProRule" id="PRU10027"/>
    </source>
</evidence>
<evidence type="ECO:0000305" key="6"/>
<accession>Q9FNE1</accession>
<proteinExistence type="evidence at transcript level"/>
<dbReference type="EC" id="2.7.11.-"/>
<dbReference type="EMBL" id="AB006702">
    <property type="protein sequence ID" value="BAB11593.1"/>
    <property type="molecule type" value="Genomic_DNA"/>
</dbReference>
<dbReference type="EMBL" id="CP002688">
    <property type="protein sequence ID" value="AED94540.1"/>
    <property type="molecule type" value="Genomic_DNA"/>
</dbReference>
<dbReference type="EMBL" id="BX829950">
    <property type="status" value="NOT_ANNOTATED_CDS"/>
    <property type="molecule type" value="mRNA"/>
</dbReference>
<dbReference type="RefSeq" id="NP_198854.3">
    <property type="nucleotide sequence ID" value="NM_123402.5"/>
</dbReference>
<dbReference type="SMR" id="Q9FNE1"/>
<dbReference type="BioGRID" id="19287">
    <property type="interactions" value="1"/>
</dbReference>
<dbReference type="FunCoup" id="Q9FNE1">
    <property type="interactions" value="17"/>
</dbReference>
<dbReference type="IntAct" id="Q9FNE1">
    <property type="interactions" value="1"/>
</dbReference>
<dbReference type="STRING" id="3702.Q9FNE1"/>
<dbReference type="GlyCosmos" id="Q9FNE1">
    <property type="glycosylation" value="2 sites, No reported glycans"/>
</dbReference>
<dbReference type="GlyGen" id="Q9FNE1">
    <property type="glycosylation" value="2 sites"/>
</dbReference>
<dbReference type="PaxDb" id="3702-AT5G40380.1"/>
<dbReference type="ProteomicsDB" id="220347"/>
<dbReference type="EnsemblPlants" id="AT5G40380.1">
    <property type="protein sequence ID" value="AT5G40380.1"/>
    <property type="gene ID" value="AT5G40380"/>
</dbReference>
<dbReference type="GeneID" id="834036"/>
<dbReference type="Gramene" id="AT5G40380.1">
    <property type="protein sequence ID" value="AT5G40380.1"/>
    <property type="gene ID" value="AT5G40380"/>
</dbReference>
<dbReference type="KEGG" id="ath:AT5G40380"/>
<dbReference type="Araport" id="AT5G40380"/>
<dbReference type="TAIR" id="AT5G40380">
    <property type="gene designation" value="CRK42"/>
</dbReference>
<dbReference type="eggNOG" id="ENOG502QRU4">
    <property type="taxonomic scope" value="Eukaryota"/>
</dbReference>
<dbReference type="HOGENOM" id="CLU_000288_35_6_1"/>
<dbReference type="InParanoid" id="Q9FNE1"/>
<dbReference type="OMA" id="YSFYQES"/>
<dbReference type="PhylomeDB" id="Q9FNE1"/>
<dbReference type="PRO" id="PR:Q9FNE1"/>
<dbReference type="Proteomes" id="UP000006548">
    <property type="component" value="Chromosome 5"/>
</dbReference>
<dbReference type="ExpressionAtlas" id="Q9FNE1">
    <property type="expression patterns" value="baseline and differential"/>
</dbReference>
<dbReference type="GO" id="GO:0016020">
    <property type="term" value="C:membrane"/>
    <property type="evidence" value="ECO:0007669"/>
    <property type="project" value="UniProtKB-SubCell"/>
</dbReference>
<dbReference type="GO" id="GO:0005524">
    <property type="term" value="F:ATP binding"/>
    <property type="evidence" value="ECO:0007669"/>
    <property type="project" value="UniProtKB-KW"/>
</dbReference>
<dbReference type="GO" id="GO:0106310">
    <property type="term" value="F:protein serine kinase activity"/>
    <property type="evidence" value="ECO:0007669"/>
    <property type="project" value="RHEA"/>
</dbReference>
<dbReference type="GO" id="GO:0004674">
    <property type="term" value="F:protein serine/threonine kinase activity"/>
    <property type="evidence" value="ECO:0007669"/>
    <property type="project" value="UniProtKB-KW"/>
</dbReference>
<dbReference type="CDD" id="cd23509">
    <property type="entry name" value="Gnk2-like"/>
    <property type="match status" value="2"/>
</dbReference>
<dbReference type="CDD" id="cd14066">
    <property type="entry name" value="STKc_IRAK"/>
    <property type="match status" value="1"/>
</dbReference>
<dbReference type="FunFam" id="1.10.510.10:FF:000336">
    <property type="entry name" value="Cysteine-rich receptor-like protein kinase 2"/>
    <property type="match status" value="1"/>
</dbReference>
<dbReference type="FunFam" id="3.30.200.20:FF:000177">
    <property type="entry name" value="Cysteine-rich receptor-like protein kinase 2"/>
    <property type="match status" value="1"/>
</dbReference>
<dbReference type="FunFam" id="3.30.430.20:FF:000015">
    <property type="entry name" value="Cysteine-rich receptor-like protein kinase 3"/>
    <property type="match status" value="1"/>
</dbReference>
<dbReference type="FunFam" id="3.30.430.20:FF:000029">
    <property type="entry name" value="Cysteine-rich receptor-like protein kinase 42"/>
    <property type="match status" value="1"/>
</dbReference>
<dbReference type="Gene3D" id="3.30.430.20">
    <property type="entry name" value="Gnk2 domain, C-X8-C-X2-C motif"/>
    <property type="match status" value="2"/>
</dbReference>
<dbReference type="Gene3D" id="3.30.200.20">
    <property type="entry name" value="Phosphorylase Kinase, domain 1"/>
    <property type="match status" value="1"/>
</dbReference>
<dbReference type="Gene3D" id="1.10.510.10">
    <property type="entry name" value="Transferase(Phosphotransferase) domain 1"/>
    <property type="match status" value="1"/>
</dbReference>
<dbReference type="InterPro" id="IPR052059">
    <property type="entry name" value="CR_Ser/Thr_kinase"/>
</dbReference>
<dbReference type="InterPro" id="IPR002902">
    <property type="entry name" value="GNK2"/>
</dbReference>
<dbReference type="InterPro" id="IPR038408">
    <property type="entry name" value="GNK2_sf"/>
</dbReference>
<dbReference type="InterPro" id="IPR011009">
    <property type="entry name" value="Kinase-like_dom_sf"/>
</dbReference>
<dbReference type="InterPro" id="IPR000719">
    <property type="entry name" value="Prot_kinase_dom"/>
</dbReference>
<dbReference type="InterPro" id="IPR017441">
    <property type="entry name" value="Protein_kinase_ATP_BS"/>
</dbReference>
<dbReference type="InterPro" id="IPR008271">
    <property type="entry name" value="Ser/Thr_kinase_AS"/>
</dbReference>
<dbReference type="PANTHER" id="PTHR47973">
    <property type="entry name" value="CYSTEINE-RICH RECEPTOR-LIKE PROTEIN KINASE 3"/>
    <property type="match status" value="1"/>
</dbReference>
<dbReference type="Pfam" id="PF00069">
    <property type="entry name" value="Pkinase"/>
    <property type="match status" value="1"/>
</dbReference>
<dbReference type="Pfam" id="PF01657">
    <property type="entry name" value="Stress-antifung"/>
    <property type="match status" value="2"/>
</dbReference>
<dbReference type="SMART" id="SM00220">
    <property type="entry name" value="S_TKc"/>
    <property type="match status" value="1"/>
</dbReference>
<dbReference type="SUPFAM" id="SSF56112">
    <property type="entry name" value="Protein kinase-like (PK-like)"/>
    <property type="match status" value="1"/>
</dbReference>
<dbReference type="PROSITE" id="PS51473">
    <property type="entry name" value="GNK2"/>
    <property type="match status" value="2"/>
</dbReference>
<dbReference type="PROSITE" id="PS00107">
    <property type="entry name" value="PROTEIN_KINASE_ATP"/>
    <property type="match status" value="1"/>
</dbReference>
<dbReference type="PROSITE" id="PS50011">
    <property type="entry name" value="PROTEIN_KINASE_DOM"/>
    <property type="match status" value="1"/>
</dbReference>
<dbReference type="PROSITE" id="PS00108">
    <property type="entry name" value="PROTEIN_KINASE_ST"/>
    <property type="match status" value="1"/>
</dbReference>
<sequence length="651" mass="72706">MRCLTKTRSFHYVIIFYSFFFLPFLSSSSDDQRTTVSGLFCGGRSKSSADPNYIPTFVEDMHSLSLKLTTRRFATESLNSTTSIYALIQCHDDLSPSDCQLCYAIARTRIPRCLPSSSARIFLDGCFLRYETYEFYDESVSDASDSFSCSNDTVLDPRFGFQVSETAARVAVRKGGFGVAGENGVHALAQCWESLGKEDCRVCLEKAVKEVKRCVSRREGRAMNTGCYLRYSDHKFYNGDGHHKFHVLFNKGVIVAIVLTTSAFVMLILLATYVIMTKVSKTKQEKRNLGLVSRKFNNSKTKFKYETLEKATDYFSHKKMLGQGGNGTVFLGILPNGKNVAVKRLVFNTRDWVEEFFNEVNLISGIQHKNLVKLLGCSIEGPESLLVYEYVPNKSLDQFLFDESQSKVLNWSQRLNIILGTAEGLAYLHGGSPVRIIHRDIKTSNVLLDDQLNPKIADFGLARCFGLDKTHLSTGIAGTLGYMAPEYVVRGQLTEKADVYSFGVLVLEIACGTRINAFVPETGHLLQRVWNLYTLNRLVEALDPCLKDEFLQVQGSEAEACKVLRVGLLCTQASPSLRPSMEEVIRMLTERDYPIPSPTSPPFLRVSSLTTDLEGSSTISHSTNSTTTFNTMVKTDQASYTSSESSTTRTI</sequence>